<gene>
    <name type="primary">mt:ND3</name>
    <name type="synonym">ND3</name>
</gene>
<proteinExistence type="evidence at protein level"/>
<dbReference type="EC" id="7.1.1.2"/>
<dbReference type="EMBL" id="M37275">
    <property type="protein sequence ID" value="AAA69709.1"/>
    <property type="molecule type" value="Genomic_DNA"/>
</dbReference>
<dbReference type="EMBL" id="AF200828">
    <property type="protein sequence ID" value="AAF77232.1"/>
    <property type="molecule type" value="Genomic_DNA"/>
</dbReference>
<dbReference type="EMBL" id="AF200829">
    <property type="protein sequence ID" value="AAF77244.1"/>
    <property type="molecule type" value="Genomic_DNA"/>
</dbReference>
<dbReference type="EMBL" id="AJ400907">
    <property type="protein sequence ID" value="CAB91057.1"/>
    <property type="molecule type" value="Genomic_DNA"/>
</dbReference>
<dbReference type="EMBL" id="U37541">
    <property type="protein sequence ID" value="AAC47817.1"/>
    <property type="molecule type" value="Genomic_DNA"/>
</dbReference>
<dbReference type="EMBL" id="KJ947872">
    <property type="protein sequence ID" value="AIC64010.1"/>
    <property type="molecule type" value="Genomic_DNA"/>
</dbReference>
<dbReference type="EMBL" id="J01404">
    <property type="protein sequence ID" value="AAB59244.1"/>
    <property type="molecule type" value="Genomic_DNA"/>
</dbReference>
<dbReference type="PIR" id="S01185">
    <property type="entry name" value="S01185"/>
</dbReference>
<dbReference type="RefSeq" id="YP_009047272.1">
    <property type="nucleotide sequence ID" value="NC_024511.2"/>
</dbReference>
<dbReference type="PDB" id="8B9Z">
    <property type="method" value="EM"/>
    <property type="resolution" value="3.28 A"/>
    <property type="chains" value="A=1-117"/>
</dbReference>
<dbReference type="PDB" id="8BA0">
    <property type="method" value="EM"/>
    <property type="resolution" value="3.68 A"/>
    <property type="chains" value="A=1-117"/>
</dbReference>
<dbReference type="PDB" id="8ESW">
    <property type="method" value="EM"/>
    <property type="resolution" value="3.30 A"/>
    <property type="chains" value="3=1-117"/>
</dbReference>
<dbReference type="PDB" id="8ESZ">
    <property type="method" value="EM"/>
    <property type="resolution" value="3.40 A"/>
    <property type="chains" value="3=1-117"/>
</dbReference>
<dbReference type="PDBsum" id="8B9Z"/>
<dbReference type="PDBsum" id="8BA0"/>
<dbReference type="PDBsum" id="8ESW"/>
<dbReference type="PDBsum" id="8ESZ"/>
<dbReference type="EMDB" id="EMD-15936"/>
<dbReference type="EMDB" id="EMD-15937"/>
<dbReference type="EMDB" id="EMD-28581"/>
<dbReference type="EMDB" id="EMD-28582"/>
<dbReference type="SMR" id="P18930"/>
<dbReference type="ComplexPortal" id="CPX-8628">
    <property type="entry name" value="Mitochondrial respiratory chain complex I"/>
</dbReference>
<dbReference type="ComplexPortal" id="CPX-8638">
    <property type="entry name" value="Mitochondrial respiratory chain complex I, testis-specific variant"/>
</dbReference>
<dbReference type="FunCoup" id="P18930">
    <property type="interactions" value="144"/>
</dbReference>
<dbReference type="STRING" id="7227.FBpp0100181"/>
<dbReference type="PaxDb" id="7227-FBpp0100181"/>
<dbReference type="EnsemblMetazoa" id="FBtr0100870">
    <property type="protein sequence ID" value="FBpp0100181"/>
    <property type="gene ID" value="FBgn0013681"/>
</dbReference>
<dbReference type="GeneID" id="19893542"/>
<dbReference type="KEGG" id="dme:Dmel_CG34076"/>
<dbReference type="AGR" id="FB:FBgn0013681"/>
<dbReference type="CTD" id="4537"/>
<dbReference type="FlyBase" id="FBgn0013681">
    <property type="gene designation" value="mt:ND3"/>
</dbReference>
<dbReference type="VEuPathDB" id="VectorBase:FBgn0013681"/>
<dbReference type="eggNOG" id="KOG4662">
    <property type="taxonomic scope" value="Eukaryota"/>
</dbReference>
<dbReference type="GeneTree" id="ENSGT00390000011605"/>
<dbReference type="HOGENOM" id="CLU_119549_3_1_1"/>
<dbReference type="InParanoid" id="P18930"/>
<dbReference type="OMA" id="HEWNQGM"/>
<dbReference type="Reactome" id="R-DME-611105">
    <property type="pathway name" value="Respiratory electron transport"/>
</dbReference>
<dbReference type="Reactome" id="R-DME-6799198">
    <property type="pathway name" value="Complex I biogenesis"/>
</dbReference>
<dbReference type="BioGRID-ORCS" id="19893542">
    <property type="hits" value="0 hits in 1 CRISPR screen"/>
</dbReference>
<dbReference type="GenomeRNAi" id="19893542"/>
<dbReference type="PRO" id="PR:P18930"/>
<dbReference type="Proteomes" id="UP000000803">
    <property type="component" value="Mitochondrion"/>
</dbReference>
<dbReference type="Bgee" id="FBgn0013681">
    <property type="expression patterns" value="Expressed in hemocyte (sensu Nematoda and Protostomia) in arthropod fat body and 209 other cell types or tissues"/>
</dbReference>
<dbReference type="ExpressionAtlas" id="P18930">
    <property type="expression patterns" value="baseline and differential"/>
</dbReference>
<dbReference type="GO" id="GO:0005743">
    <property type="term" value="C:mitochondrial inner membrane"/>
    <property type="evidence" value="ECO:0000305"/>
    <property type="project" value="FlyBase"/>
</dbReference>
<dbReference type="GO" id="GO:0045271">
    <property type="term" value="C:respiratory chain complex I"/>
    <property type="evidence" value="ECO:0000314"/>
    <property type="project" value="FlyBase"/>
</dbReference>
<dbReference type="GO" id="GO:0008137">
    <property type="term" value="F:NADH dehydrogenase (ubiquinone) activity"/>
    <property type="evidence" value="ECO:0000318"/>
    <property type="project" value="GO_Central"/>
</dbReference>
<dbReference type="GO" id="GO:0006120">
    <property type="term" value="P:mitochondrial electron transport, NADH to ubiquinone"/>
    <property type="evidence" value="ECO:0000305"/>
    <property type="project" value="FlyBase"/>
</dbReference>
<dbReference type="FunFam" id="1.20.58.1610:FF:000004">
    <property type="entry name" value="NADH-quinone oxidoreductase subunit A"/>
    <property type="match status" value="1"/>
</dbReference>
<dbReference type="Gene3D" id="1.20.58.1610">
    <property type="entry name" value="NADH:ubiquinone/plastoquinone oxidoreductase, chain 3"/>
    <property type="match status" value="1"/>
</dbReference>
<dbReference type="InterPro" id="IPR000440">
    <property type="entry name" value="NADH_UbQ/plastoQ_OxRdtase_su3"/>
</dbReference>
<dbReference type="InterPro" id="IPR038430">
    <property type="entry name" value="NDAH_ubi_oxred_su3_sf"/>
</dbReference>
<dbReference type="PANTHER" id="PTHR11058">
    <property type="entry name" value="NADH-UBIQUINONE OXIDOREDUCTASE CHAIN 3"/>
    <property type="match status" value="1"/>
</dbReference>
<dbReference type="PANTHER" id="PTHR11058:SF9">
    <property type="entry name" value="NADH-UBIQUINONE OXIDOREDUCTASE CHAIN 3"/>
    <property type="match status" value="1"/>
</dbReference>
<dbReference type="Pfam" id="PF00507">
    <property type="entry name" value="Oxidored_q4"/>
    <property type="match status" value="1"/>
</dbReference>
<sequence length="117" mass="13564">MFSIIFIALLILLITTIVMFLASILSKKALIDREKSSPFECGFDPKSSSRLPFSLRFFLITIIFLIFDVEIALILPMIIIMKYSNIMIWTITSIIFILILLIGLYHEWNQGMLNWSN</sequence>
<organism>
    <name type="scientific">Drosophila melanogaster</name>
    <name type="common">Fruit fly</name>
    <dbReference type="NCBI Taxonomy" id="7227"/>
    <lineage>
        <taxon>Eukaryota</taxon>
        <taxon>Metazoa</taxon>
        <taxon>Ecdysozoa</taxon>
        <taxon>Arthropoda</taxon>
        <taxon>Hexapoda</taxon>
        <taxon>Insecta</taxon>
        <taxon>Pterygota</taxon>
        <taxon>Neoptera</taxon>
        <taxon>Endopterygota</taxon>
        <taxon>Diptera</taxon>
        <taxon>Brachycera</taxon>
        <taxon>Muscomorpha</taxon>
        <taxon>Ephydroidea</taxon>
        <taxon>Drosophilidae</taxon>
        <taxon>Drosophila</taxon>
        <taxon>Sophophora</taxon>
    </lineage>
</organism>
<name>NU3M_DROME</name>
<feature type="chain" id="PRO_0000117736" description="NADH-ubiquinone oxidoreductase chain 3">
    <location>
        <begin position="1"/>
        <end position="117"/>
    </location>
</feature>
<feature type="transmembrane region" description="Helical" evidence="2">
    <location>
        <begin position="4"/>
        <end position="24"/>
    </location>
</feature>
<feature type="transmembrane region" description="Helical" evidence="2">
    <location>
        <begin position="60"/>
        <end position="80"/>
    </location>
</feature>
<feature type="transmembrane region" description="Helical" evidence="2">
    <location>
        <begin position="86"/>
        <end position="106"/>
    </location>
</feature>
<feature type="helix" evidence="4">
    <location>
        <begin position="2"/>
        <end position="25"/>
    </location>
</feature>
<feature type="turn" evidence="4">
    <location>
        <begin position="33"/>
        <end position="36"/>
    </location>
</feature>
<feature type="helix" evidence="4">
    <location>
        <begin position="58"/>
        <end position="74"/>
    </location>
</feature>
<feature type="helix" evidence="4">
    <location>
        <begin position="75"/>
        <end position="80"/>
    </location>
</feature>
<feature type="strand" evidence="4">
    <location>
        <begin position="81"/>
        <end position="84"/>
    </location>
</feature>
<feature type="helix" evidence="4">
    <location>
        <begin position="86"/>
        <end position="110"/>
    </location>
</feature>
<geneLocation type="mitochondrion"/>
<comment type="function">
    <text evidence="1">Core subunit of the mitochondrial membrane respiratory chain NADH dehydrogenase (Complex I) that is believed to belong to the minimal assembly required for catalysis. Complex I functions in the transfer of electrons from NADH to the respiratory chain. The immediate electron acceptor for the enzyme is believed to be ubiquinone (By similarity).</text>
</comment>
<comment type="catalytic activity">
    <reaction>
        <text>a ubiquinone + NADH + 5 H(+)(in) = a ubiquinol + NAD(+) + 4 H(+)(out)</text>
        <dbReference type="Rhea" id="RHEA:29091"/>
        <dbReference type="Rhea" id="RHEA-COMP:9565"/>
        <dbReference type="Rhea" id="RHEA-COMP:9566"/>
        <dbReference type="ChEBI" id="CHEBI:15378"/>
        <dbReference type="ChEBI" id="CHEBI:16389"/>
        <dbReference type="ChEBI" id="CHEBI:17976"/>
        <dbReference type="ChEBI" id="CHEBI:57540"/>
        <dbReference type="ChEBI" id="CHEBI:57945"/>
        <dbReference type="EC" id="7.1.1.2"/>
    </reaction>
</comment>
<comment type="subcellular location">
    <subcellularLocation>
        <location evidence="1">Mitochondrion membrane</location>
        <topology evidence="1">Multi-pass membrane protein</topology>
    </subcellularLocation>
</comment>
<comment type="similarity">
    <text evidence="3">Belongs to the complex I subunit 3 family.</text>
</comment>
<accession>P18930</accession>
<accession>Q7HM99</accession>
<keyword id="KW-0002">3D-structure</keyword>
<keyword id="KW-0249">Electron transport</keyword>
<keyword id="KW-0472">Membrane</keyword>
<keyword id="KW-0496">Mitochondrion</keyword>
<keyword id="KW-0520">NAD</keyword>
<keyword id="KW-1185">Reference proteome</keyword>
<keyword id="KW-0679">Respiratory chain</keyword>
<keyword id="KW-1278">Translocase</keyword>
<keyword id="KW-0812">Transmembrane</keyword>
<keyword id="KW-1133">Transmembrane helix</keyword>
<keyword id="KW-0813">Transport</keyword>
<keyword id="KW-0830">Ubiquinone</keyword>
<protein>
    <recommendedName>
        <fullName>NADH-ubiquinone oxidoreductase chain 3</fullName>
        <ecNumber>7.1.1.2</ecNumber>
    </recommendedName>
    <alternativeName>
        <fullName>NADH dehydrogenase subunit 3</fullName>
    </alternativeName>
</protein>
<reference key="1">
    <citation type="journal article" date="1988" name="Genetics">
        <title>Drosophila melanogaster mitochondrial DNA: gene organization and evolutionary considerations.</title>
        <authorList>
            <person name="Garesse R."/>
        </authorList>
    </citation>
    <scope>NUCLEOTIDE SEQUENCE [GENOMIC DNA]</scope>
    <source>
        <strain>Bretagne</strain>
    </source>
</reference>
<reference key="2">
    <citation type="journal article" date="2000" name="J. Mol. Evol.">
        <title>Comparative genomics of mitochondrial DNA in members of the Drosophila melanogaster subgroup.</title>
        <authorList>
            <person name="Ballard J.W.O."/>
        </authorList>
    </citation>
    <scope>NUCLEOTIDE SEQUENCE [GENOMIC DNA]</scope>
    <source>
        <strain>Oregon-R</strain>
        <strain>Zimbabwe 53</strain>
    </source>
</reference>
<reference key="3">
    <citation type="journal article" date="2001" name="Heredity">
        <title>I-R system of hybrid dysgenesis in Drosophila melanogaster: analysis of the mitochondrial DNA in reactive strains exhibiting different potentials for I factor transposition.</title>
        <authorList>
            <person name="Azou Y."/>
            <person name="Bregliano J.C."/>
        </authorList>
    </citation>
    <scope>NUCLEOTIDE SEQUENCE [GENOMIC DNA]</scope>
    <source>
        <strain>Paris</strain>
    </source>
</reference>
<reference key="4">
    <citation type="journal article" date="1995" name="Insect Mol. Biol.">
        <title>Drosophila melanogaster mitochondrial DNA: completion of the nucleotide sequence and evolutionary comparisons.</title>
        <authorList>
            <person name="Lewis D.L."/>
            <person name="Farr C.L."/>
            <person name="Kaguni L.S."/>
        </authorList>
    </citation>
    <scope>NUCLEOTIDE SEQUENCE [LARGE SCALE GENOMIC DNA]</scope>
</reference>
<reference key="5">
    <citation type="submission" date="2014-08" db="EMBL/GenBank/DDBJ databases">
        <authorList>
            <person name="Wan K."/>
            <person name="Celniker S."/>
        </authorList>
    </citation>
    <scope>NUCLEOTIDE SEQUENCE [LARGE SCALE GENOMIC DNA]</scope>
    <source>
        <strain>Berkeley</strain>
    </source>
</reference>
<reference key="6">
    <citation type="journal article" date="1983" name="Nucleic Acids Res.">
        <title>Transfer RNA genes in Drosophila mitochondrial DNA: related 5' flanking sequences and comparisons to mammalian mitochondrial tRNA genes.</title>
        <authorList>
            <person name="Clary D.O."/>
            <person name="Wahleithner J.A."/>
            <person name="Wolstenholme D.R."/>
        </authorList>
    </citation>
    <scope>NUCLEOTIDE SEQUENCE [GENOMIC DNA] OF 1-29</scope>
    <source>
        <strain>Oregon-R</strain>
    </source>
</reference>
<evidence type="ECO:0000250" key="1"/>
<evidence type="ECO:0000255" key="2"/>
<evidence type="ECO:0000305" key="3"/>
<evidence type="ECO:0007829" key="4">
    <source>
        <dbReference type="PDB" id="8B9Z"/>
    </source>
</evidence>